<name>SYFB_MYCMS</name>
<reference key="1">
    <citation type="journal article" date="2004" name="Genome Res.">
        <title>The genome sequence of Mycoplasma mycoides subsp. mycoides SC type strain PG1T, the causative agent of contagious bovine pleuropneumonia (CBPP).</title>
        <authorList>
            <person name="Westberg J."/>
            <person name="Persson A."/>
            <person name="Holmberg A."/>
            <person name="Goesmann A."/>
            <person name="Lundeberg J."/>
            <person name="Johansson K.-E."/>
            <person name="Pettersson B."/>
            <person name="Uhlen M."/>
        </authorList>
    </citation>
    <scope>NUCLEOTIDE SEQUENCE [LARGE SCALE GENOMIC DNA]</scope>
    <source>
        <strain>CCUG 32753 / NCTC 10114 / PG1</strain>
    </source>
</reference>
<protein>
    <recommendedName>
        <fullName evidence="1">Phenylalanine--tRNA ligase beta subunit</fullName>
        <ecNumber evidence="1">6.1.1.20</ecNumber>
    </recommendedName>
    <alternativeName>
        <fullName evidence="1">Phenylalanyl-tRNA synthetase beta subunit</fullName>
        <shortName evidence="1">PheRS</shortName>
    </alternativeName>
</protein>
<evidence type="ECO:0000255" key="1">
    <source>
        <dbReference type="HAMAP-Rule" id="MF_00283"/>
    </source>
</evidence>
<comment type="catalytic activity">
    <reaction evidence="1">
        <text>tRNA(Phe) + L-phenylalanine + ATP = L-phenylalanyl-tRNA(Phe) + AMP + diphosphate + H(+)</text>
        <dbReference type="Rhea" id="RHEA:19413"/>
        <dbReference type="Rhea" id="RHEA-COMP:9668"/>
        <dbReference type="Rhea" id="RHEA-COMP:9699"/>
        <dbReference type="ChEBI" id="CHEBI:15378"/>
        <dbReference type="ChEBI" id="CHEBI:30616"/>
        <dbReference type="ChEBI" id="CHEBI:33019"/>
        <dbReference type="ChEBI" id="CHEBI:58095"/>
        <dbReference type="ChEBI" id="CHEBI:78442"/>
        <dbReference type="ChEBI" id="CHEBI:78531"/>
        <dbReference type="ChEBI" id="CHEBI:456215"/>
        <dbReference type="EC" id="6.1.1.20"/>
    </reaction>
</comment>
<comment type="cofactor">
    <cofactor evidence="1">
        <name>Mg(2+)</name>
        <dbReference type="ChEBI" id="CHEBI:18420"/>
    </cofactor>
    <text evidence="1">Binds 2 magnesium ions per tetramer.</text>
</comment>
<comment type="subunit">
    <text evidence="1">Tetramer of two alpha and two beta subunits.</text>
</comment>
<comment type="subcellular location">
    <subcellularLocation>
        <location evidence="1">Cytoplasm</location>
    </subcellularLocation>
</comment>
<comment type="similarity">
    <text evidence="1">Belongs to the phenylalanyl-tRNA synthetase beta subunit family. Type 1 subfamily.</text>
</comment>
<accession>Q6MT18</accession>
<keyword id="KW-0030">Aminoacyl-tRNA synthetase</keyword>
<keyword id="KW-0067">ATP-binding</keyword>
<keyword id="KW-0963">Cytoplasm</keyword>
<keyword id="KW-0436">Ligase</keyword>
<keyword id="KW-0460">Magnesium</keyword>
<keyword id="KW-0479">Metal-binding</keyword>
<keyword id="KW-0547">Nucleotide-binding</keyword>
<keyword id="KW-0648">Protein biosynthesis</keyword>
<keyword id="KW-1185">Reference proteome</keyword>
<keyword id="KW-0694">RNA-binding</keyword>
<keyword id="KW-0820">tRNA-binding</keyword>
<feature type="chain" id="PRO_0000232811" description="Phenylalanine--tRNA ligase beta subunit">
    <location>
        <begin position="1"/>
        <end position="794"/>
    </location>
</feature>
<feature type="domain" description="tRNA-binding" evidence="1">
    <location>
        <begin position="40"/>
        <end position="158"/>
    </location>
</feature>
<feature type="domain" description="B5" evidence="1">
    <location>
        <begin position="402"/>
        <end position="477"/>
    </location>
</feature>
<feature type="domain" description="FDX-ACB" evidence="1">
    <location>
        <begin position="702"/>
        <end position="794"/>
    </location>
</feature>
<feature type="binding site" evidence="1">
    <location>
        <position position="455"/>
    </location>
    <ligand>
        <name>Mg(2+)</name>
        <dbReference type="ChEBI" id="CHEBI:18420"/>
        <note>shared with alpha subunit</note>
    </ligand>
</feature>
<feature type="binding site" evidence="1">
    <location>
        <position position="461"/>
    </location>
    <ligand>
        <name>Mg(2+)</name>
        <dbReference type="ChEBI" id="CHEBI:18420"/>
        <note>shared with alpha subunit</note>
    </ligand>
</feature>
<feature type="binding site" evidence="1">
    <location>
        <position position="464"/>
    </location>
    <ligand>
        <name>Mg(2+)</name>
        <dbReference type="ChEBI" id="CHEBI:18420"/>
        <note>shared with alpha subunit</note>
    </ligand>
</feature>
<feature type="binding site" evidence="1">
    <location>
        <position position="465"/>
    </location>
    <ligand>
        <name>Mg(2+)</name>
        <dbReference type="ChEBI" id="CHEBI:18420"/>
        <note>shared with alpha subunit</note>
    </ligand>
</feature>
<organism>
    <name type="scientific">Mycoplasma mycoides subsp. mycoides SC (strain CCUG 32753 / NCTC 10114 / PG1)</name>
    <dbReference type="NCBI Taxonomy" id="272632"/>
    <lineage>
        <taxon>Bacteria</taxon>
        <taxon>Bacillati</taxon>
        <taxon>Mycoplasmatota</taxon>
        <taxon>Mollicutes</taxon>
        <taxon>Mycoplasmataceae</taxon>
        <taxon>Mycoplasma</taxon>
    </lineage>
</organism>
<proteinExistence type="inferred from homology"/>
<sequence length="794" mass="92183">MIITRNWLKKYLNLDNISNDQINMALNSLGFEVDSVYDLNSLNSELILGYVEQSKQIPDTHLKLNQVNIGTKSLQIVCGASNVDANQFVVIAPINATIANGLTLTSKKIQNYESQGMICALNEIGIDLSVINKEDQLKIYNVSDKNLDLKKYIGSDVKQIIGLDDYLFEIDLTLNRSDCLASFQILKELANYFDLKIKNLDNNFSDFKKNNLDLKIDLANQVKDQIKTISYSYFELNNKNDKLDSKDEIFLKLNQINSSNHSITNLSLISTLSTAQTHILIDLDKLKSSNLKLEFINHDNKELLCLTNNNKLVNIIGLDTQNEFNVDNNSKNVLNIMLNIEPNLMRKQQKLLNISNTYLQRYIKPINPNLFNLANQTFSNLLNDYQLINKAYEVKILKQTFKNKQSLEIKLNEINDLLGTNLTIKQIKSLFKHLDFKITNKDDLLDFQIDQNRIDITSKNDLCEEVARLYSYDKIDEIPLSFTSFKKAKNLNLKLENKLTNYLIGLGFNNTKTYSLTSLNEAKYWNLFNISEFINLVSPLSNLRQTYRTNLSKSLIDVAIFNHSINNKELKLFEIADIYDLNNLKQRHLVFLTSNHIYKNSLNQQLIENNFYYNKEILENIFNLYNLDLSEIQYQSDLNLIKEIHPYINTTIYYQNQLIGYLYKLNPKFESENKLNPTFVCEINLDILNQFKNSFIEAKTLSKFQSSSRDLTIEISNDLTYQKVLFNALSDVKYLKSHKIVDLYLDDNLIKNNTKALTIQFVFNDLEHQLTENEINQEFEKIIKNIKQMKVVIR</sequence>
<dbReference type="EC" id="6.1.1.20" evidence="1"/>
<dbReference type="EMBL" id="BX293980">
    <property type="protein sequence ID" value="CAE77218.1"/>
    <property type="molecule type" value="Genomic_DNA"/>
</dbReference>
<dbReference type="RefSeq" id="NP_975576.1">
    <property type="nucleotide sequence ID" value="NC_005364.2"/>
</dbReference>
<dbReference type="RefSeq" id="WP_011166772.1">
    <property type="nucleotide sequence ID" value="NC_005364.2"/>
</dbReference>
<dbReference type="SMR" id="Q6MT18"/>
<dbReference type="STRING" id="272632.MSC_0595"/>
<dbReference type="KEGG" id="mmy:MSC_0595"/>
<dbReference type="PATRIC" id="fig|272632.4.peg.640"/>
<dbReference type="eggNOG" id="COG0072">
    <property type="taxonomic scope" value="Bacteria"/>
</dbReference>
<dbReference type="eggNOG" id="COG0073">
    <property type="taxonomic scope" value="Bacteria"/>
</dbReference>
<dbReference type="HOGENOM" id="CLU_016891_2_0_14"/>
<dbReference type="Proteomes" id="UP000001016">
    <property type="component" value="Chromosome"/>
</dbReference>
<dbReference type="GO" id="GO:0009328">
    <property type="term" value="C:phenylalanine-tRNA ligase complex"/>
    <property type="evidence" value="ECO:0007669"/>
    <property type="project" value="TreeGrafter"/>
</dbReference>
<dbReference type="GO" id="GO:0005524">
    <property type="term" value="F:ATP binding"/>
    <property type="evidence" value="ECO:0007669"/>
    <property type="project" value="UniProtKB-UniRule"/>
</dbReference>
<dbReference type="GO" id="GO:0000287">
    <property type="term" value="F:magnesium ion binding"/>
    <property type="evidence" value="ECO:0007669"/>
    <property type="project" value="UniProtKB-UniRule"/>
</dbReference>
<dbReference type="GO" id="GO:0004826">
    <property type="term" value="F:phenylalanine-tRNA ligase activity"/>
    <property type="evidence" value="ECO:0007669"/>
    <property type="project" value="UniProtKB-UniRule"/>
</dbReference>
<dbReference type="GO" id="GO:0000049">
    <property type="term" value="F:tRNA binding"/>
    <property type="evidence" value="ECO:0007669"/>
    <property type="project" value="UniProtKB-KW"/>
</dbReference>
<dbReference type="GO" id="GO:0006432">
    <property type="term" value="P:phenylalanyl-tRNA aminoacylation"/>
    <property type="evidence" value="ECO:0007669"/>
    <property type="project" value="UniProtKB-UniRule"/>
</dbReference>
<dbReference type="CDD" id="cd02796">
    <property type="entry name" value="tRNA_bind_bactPheRS"/>
    <property type="match status" value="1"/>
</dbReference>
<dbReference type="Gene3D" id="3.30.56.10">
    <property type="match status" value="2"/>
</dbReference>
<dbReference type="Gene3D" id="3.30.930.10">
    <property type="entry name" value="Bira Bifunctional Protein, Domain 2"/>
    <property type="match status" value="1"/>
</dbReference>
<dbReference type="Gene3D" id="3.30.70.380">
    <property type="entry name" value="Ferrodoxin-fold anticodon-binding domain"/>
    <property type="match status" value="1"/>
</dbReference>
<dbReference type="Gene3D" id="2.40.50.140">
    <property type="entry name" value="Nucleic acid-binding proteins"/>
    <property type="match status" value="1"/>
</dbReference>
<dbReference type="Gene3D" id="3.50.40.10">
    <property type="entry name" value="Phenylalanyl-trna Synthetase, Chain B, domain 3"/>
    <property type="match status" value="1"/>
</dbReference>
<dbReference type="HAMAP" id="MF_00283">
    <property type="entry name" value="Phe_tRNA_synth_beta1"/>
    <property type="match status" value="1"/>
</dbReference>
<dbReference type="InterPro" id="IPR045864">
    <property type="entry name" value="aa-tRNA-synth_II/BPL/LPL"/>
</dbReference>
<dbReference type="InterPro" id="IPR005146">
    <property type="entry name" value="B3/B4_tRNA-bd"/>
</dbReference>
<dbReference type="InterPro" id="IPR009061">
    <property type="entry name" value="DNA-bd_dom_put_sf"/>
</dbReference>
<dbReference type="InterPro" id="IPR005121">
    <property type="entry name" value="Fdx_antiC-bd"/>
</dbReference>
<dbReference type="InterPro" id="IPR036690">
    <property type="entry name" value="Fdx_antiC-bd_sf"/>
</dbReference>
<dbReference type="InterPro" id="IPR012340">
    <property type="entry name" value="NA-bd_OB-fold"/>
</dbReference>
<dbReference type="InterPro" id="IPR045060">
    <property type="entry name" value="Phe-tRNA-ligase_IIc_bsu"/>
</dbReference>
<dbReference type="InterPro" id="IPR004532">
    <property type="entry name" value="Phe-tRNA-ligase_IIc_bsu_bact"/>
</dbReference>
<dbReference type="InterPro" id="IPR020825">
    <property type="entry name" value="Phe-tRNA_synthase-like_B3/B4"/>
</dbReference>
<dbReference type="InterPro" id="IPR041616">
    <property type="entry name" value="PheRS_beta_core"/>
</dbReference>
<dbReference type="InterPro" id="IPR002547">
    <property type="entry name" value="tRNA-bd_dom"/>
</dbReference>
<dbReference type="InterPro" id="IPR033714">
    <property type="entry name" value="tRNA_bind_bactPheRS"/>
</dbReference>
<dbReference type="InterPro" id="IPR005147">
    <property type="entry name" value="tRNA_synthase_B5-dom"/>
</dbReference>
<dbReference type="NCBIfam" id="TIGR00472">
    <property type="entry name" value="pheT_bact"/>
    <property type="match status" value="1"/>
</dbReference>
<dbReference type="NCBIfam" id="NF045760">
    <property type="entry name" value="YtpR"/>
    <property type="match status" value="1"/>
</dbReference>
<dbReference type="PANTHER" id="PTHR10947:SF0">
    <property type="entry name" value="PHENYLALANINE--TRNA LIGASE BETA SUBUNIT"/>
    <property type="match status" value="1"/>
</dbReference>
<dbReference type="PANTHER" id="PTHR10947">
    <property type="entry name" value="PHENYLALANYL-TRNA SYNTHETASE BETA CHAIN AND LEUCINE-RICH REPEAT-CONTAINING PROTEIN 47"/>
    <property type="match status" value="1"/>
</dbReference>
<dbReference type="Pfam" id="PF03484">
    <property type="entry name" value="B5"/>
    <property type="match status" value="1"/>
</dbReference>
<dbReference type="Pfam" id="PF03147">
    <property type="entry name" value="FDX-ACB"/>
    <property type="match status" value="1"/>
</dbReference>
<dbReference type="Pfam" id="PF01588">
    <property type="entry name" value="tRNA_bind"/>
    <property type="match status" value="1"/>
</dbReference>
<dbReference type="Pfam" id="PF17759">
    <property type="entry name" value="tRNA_synthFbeta"/>
    <property type="match status" value="1"/>
</dbReference>
<dbReference type="SMART" id="SM00873">
    <property type="entry name" value="B3_4"/>
    <property type="match status" value="1"/>
</dbReference>
<dbReference type="SMART" id="SM00874">
    <property type="entry name" value="B5"/>
    <property type="match status" value="1"/>
</dbReference>
<dbReference type="SMART" id="SM00896">
    <property type="entry name" value="FDX-ACB"/>
    <property type="match status" value="1"/>
</dbReference>
<dbReference type="SUPFAM" id="SSF54991">
    <property type="entry name" value="Anticodon-binding domain of PheRS"/>
    <property type="match status" value="1"/>
</dbReference>
<dbReference type="SUPFAM" id="SSF55681">
    <property type="entry name" value="Class II aaRS and biotin synthetases"/>
    <property type="match status" value="1"/>
</dbReference>
<dbReference type="SUPFAM" id="SSF50249">
    <property type="entry name" value="Nucleic acid-binding proteins"/>
    <property type="match status" value="1"/>
</dbReference>
<dbReference type="SUPFAM" id="SSF56037">
    <property type="entry name" value="PheT/TilS domain"/>
    <property type="match status" value="1"/>
</dbReference>
<dbReference type="SUPFAM" id="SSF46955">
    <property type="entry name" value="Putative DNA-binding domain"/>
    <property type="match status" value="1"/>
</dbReference>
<dbReference type="PROSITE" id="PS51483">
    <property type="entry name" value="B5"/>
    <property type="match status" value="1"/>
</dbReference>
<dbReference type="PROSITE" id="PS51447">
    <property type="entry name" value="FDX_ACB"/>
    <property type="match status" value="1"/>
</dbReference>
<dbReference type="PROSITE" id="PS50886">
    <property type="entry name" value="TRBD"/>
    <property type="match status" value="1"/>
</dbReference>
<gene>
    <name evidence="1" type="primary">pheT</name>
    <name type="ordered locus">MSC_0595</name>
</gene>